<name>GGGPS_METAC</name>
<feature type="chain" id="PRO_0000138731" description="Geranylgeranylglyceryl phosphate synthase">
    <location>
        <begin position="1"/>
        <end position="247"/>
    </location>
</feature>
<feature type="binding site" evidence="1">
    <location>
        <position position="23"/>
    </location>
    <ligand>
        <name>Mg(2+)</name>
        <dbReference type="ChEBI" id="CHEBI:18420"/>
    </ligand>
</feature>
<feature type="binding site" evidence="1">
    <location>
        <position position="52"/>
    </location>
    <ligand>
        <name>Mg(2+)</name>
        <dbReference type="ChEBI" id="CHEBI:18420"/>
    </ligand>
</feature>
<feature type="binding site" evidence="1">
    <location>
        <begin position="171"/>
        <end position="177"/>
    </location>
    <ligand>
        <name>sn-glycerol 1-phosphate</name>
        <dbReference type="ChEBI" id="CHEBI:57685"/>
    </ligand>
</feature>
<feature type="binding site" evidence="1">
    <location>
        <begin position="203"/>
        <end position="204"/>
    </location>
    <ligand>
        <name>sn-glycerol 1-phosphate</name>
        <dbReference type="ChEBI" id="CHEBI:57685"/>
    </ligand>
</feature>
<feature type="binding site" evidence="1">
    <location>
        <begin position="225"/>
        <end position="226"/>
    </location>
    <ligand>
        <name>sn-glycerol 1-phosphate</name>
        <dbReference type="ChEBI" id="CHEBI:57685"/>
    </ligand>
</feature>
<proteinExistence type="inferred from homology"/>
<comment type="function">
    <text evidence="1">Prenyltransferase that catalyzes the transfer of the geranylgeranyl moiety of geranylgeranyl diphosphate (GGPP) to the C3 hydroxyl of sn-glycerol-1-phosphate (G1P). This reaction is the first ether-bond-formation step in the biosynthesis of archaeal membrane lipids.</text>
</comment>
<comment type="catalytic activity">
    <reaction evidence="1">
        <text>sn-glycerol 1-phosphate + (2E,6E,10E)-geranylgeranyl diphosphate = sn-3-O-(geranylgeranyl)glycerol 1-phosphate + diphosphate</text>
        <dbReference type="Rhea" id="RHEA:23404"/>
        <dbReference type="ChEBI" id="CHEBI:33019"/>
        <dbReference type="ChEBI" id="CHEBI:57677"/>
        <dbReference type="ChEBI" id="CHEBI:57685"/>
        <dbReference type="ChEBI" id="CHEBI:58756"/>
        <dbReference type="EC" id="2.5.1.41"/>
    </reaction>
</comment>
<comment type="cofactor">
    <cofactor evidence="1">
        <name>Mg(2+)</name>
        <dbReference type="ChEBI" id="CHEBI:18420"/>
    </cofactor>
</comment>
<comment type="pathway">
    <text evidence="1">Membrane lipid metabolism; glycerophospholipid metabolism.</text>
</comment>
<comment type="subcellular location">
    <subcellularLocation>
        <location evidence="1">Cytoplasm</location>
    </subcellularLocation>
</comment>
<comment type="similarity">
    <text evidence="1">Belongs to the GGGP/HepGP synthase family. Group II subfamily.</text>
</comment>
<accession>Q8TJ20</accession>
<keyword id="KW-0963">Cytoplasm</keyword>
<keyword id="KW-0444">Lipid biosynthesis</keyword>
<keyword id="KW-0443">Lipid metabolism</keyword>
<keyword id="KW-0460">Magnesium</keyword>
<keyword id="KW-0479">Metal-binding</keyword>
<keyword id="KW-0594">Phospholipid biosynthesis</keyword>
<keyword id="KW-1208">Phospholipid metabolism</keyword>
<keyword id="KW-1185">Reference proteome</keyword>
<keyword id="KW-0808">Transferase</keyword>
<evidence type="ECO:0000255" key="1">
    <source>
        <dbReference type="HAMAP-Rule" id="MF_00112"/>
    </source>
</evidence>
<protein>
    <recommendedName>
        <fullName evidence="1">Geranylgeranylglyceryl phosphate synthase</fullName>
        <shortName evidence="1">GGGP synthase</shortName>
        <shortName evidence="1">GGGPS</shortName>
        <ecNumber evidence="1">2.5.1.41</ecNumber>
    </recommendedName>
    <alternativeName>
        <fullName evidence="1">(S)-3-O-geranylgeranylglyceryl phosphate synthase</fullName>
    </alternativeName>
    <alternativeName>
        <fullName evidence="1">Phosphoglycerol geranylgeranyltransferase</fullName>
    </alternativeName>
</protein>
<dbReference type="EC" id="2.5.1.41" evidence="1"/>
<dbReference type="EMBL" id="AE010299">
    <property type="protein sequence ID" value="AAM07319.1"/>
    <property type="molecule type" value="Genomic_DNA"/>
</dbReference>
<dbReference type="RefSeq" id="WP_011023864.1">
    <property type="nucleotide sequence ID" value="NC_003552.1"/>
</dbReference>
<dbReference type="SMR" id="Q8TJ20"/>
<dbReference type="FunCoup" id="Q8TJ20">
    <property type="interactions" value="1"/>
</dbReference>
<dbReference type="STRING" id="188937.MA_3969"/>
<dbReference type="EnsemblBacteria" id="AAM07319">
    <property type="protein sequence ID" value="AAM07319"/>
    <property type="gene ID" value="MA_3969"/>
</dbReference>
<dbReference type="GeneID" id="1475862"/>
<dbReference type="KEGG" id="mac:MA_3969"/>
<dbReference type="HOGENOM" id="CLU_068610_0_0_2"/>
<dbReference type="InParanoid" id="Q8TJ20"/>
<dbReference type="OrthoDB" id="7409at2157"/>
<dbReference type="PhylomeDB" id="Q8TJ20"/>
<dbReference type="UniPathway" id="UPA00940"/>
<dbReference type="Proteomes" id="UP000002487">
    <property type="component" value="Chromosome"/>
</dbReference>
<dbReference type="GO" id="GO:0005737">
    <property type="term" value="C:cytoplasm"/>
    <property type="evidence" value="ECO:0007669"/>
    <property type="project" value="UniProtKB-SubCell"/>
</dbReference>
<dbReference type="GO" id="GO:0000107">
    <property type="term" value="F:imidazoleglycerol-phosphate synthase activity"/>
    <property type="evidence" value="ECO:0000318"/>
    <property type="project" value="GO_Central"/>
</dbReference>
<dbReference type="GO" id="GO:0000287">
    <property type="term" value="F:magnesium ion binding"/>
    <property type="evidence" value="ECO:0007669"/>
    <property type="project" value="UniProtKB-UniRule"/>
</dbReference>
<dbReference type="GO" id="GO:0047294">
    <property type="term" value="F:phosphoglycerol geranylgeranyltransferase activity"/>
    <property type="evidence" value="ECO:0007669"/>
    <property type="project" value="UniProtKB-UniRule"/>
</dbReference>
<dbReference type="GO" id="GO:0046474">
    <property type="term" value="P:glycerophospholipid biosynthetic process"/>
    <property type="evidence" value="ECO:0007669"/>
    <property type="project" value="UniProtKB-UniRule"/>
</dbReference>
<dbReference type="CDD" id="cd02812">
    <property type="entry name" value="PcrB_like"/>
    <property type="match status" value="1"/>
</dbReference>
<dbReference type="FunFam" id="3.20.20.390:FF:000001">
    <property type="entry name" value="Heptaprenylglyceryl phosphate synthase"/>
    <property type="match status" value="1"/>
</dbReference>
<dbReference type="Gene3D" id="3.20.20.390">
    <property type="entry name" value="FMN-linked oxidoreductases"/>
    <property type="match status" value="1"/>
</dbReference>
<dbReference type="HAMAP" id="MF_00112">
    <property type="entry name" value="GGGP_HepGP_synthase"/>
    <property type="match status" value="1"/>
</dbReference>
<dbReference type="InterPro" id="IPR038597">
    <property type="entry name" value="GGGP/HepGP_synthase_sf"/>
</dbReference>
<dbReference type="InterPro" id="IPR008205">
    <property type="entry name" value="GGGP_HepGP_synthase"/>
</dbReference>
<dbReference type="InterPro" id="IPR010946">
    <property type="entry name" value="GGGP_synth"/>
</dbReference>
<dbReference type="InterPro" id="IPR050064">
    <property type="entry name" value="IGPS_HisA/HisF"/>
</dbReference>
<dbReference type="NCBIfam" id="TIGR01769">
    <property type="entry name" value="GGGP"/>
    <property type="match status" value="1"/>
</dbReference>
<dbReference type="NCBIfam" id="TIGR01768">
    <property type="entry name" value="GGGP-family"/>
    <property type="match status" value="1"/>
</dbReference>
<dbReference type="NCBIfam" id="NF003198">
    <property type="entry name" value="PRK04169.1-2"/>
    <property type="match status" value="1"/>
</dbReference>
<dbReference type="PANTHER" id="PTHR21235:SF22">
    <property type="entry name" value="GERANYLGERANYLGLYCERYL PHOSPHATE SYNTHASE"/>
    <property type="match status" value="1"/>
</dbReference>
<dbReference type="PANTHER" id="PTHR21235">
    <property type="entry name" value="IMIDAZOLE GLYCEROL PHOSPHATE SYNTHASE SUBUNIT HISF/H IGP SYNTHASE SUBUNIT HISF/H"/>
    <property type="match status" value="1"/>
</dbReference>
<dbReference type="Pfam" id="PF01884">
    <property type="entry name" value="PcrB"/>
    <property type="match status" value="1"/>
</dbReference>
<dbReference type="SUPFAM" id="SSF51395">
    <property type="entry name" value="FMN-linked oxidoreductases"/>
    <property type="match status" value="1"/>
</dbReference>
<reference key="1">
    <citation type="journal article" date="2002" name="Genome Res.">
        <title>The genome of Methanosarcina acetivorans reveals extensive metabolic and physiological diversity.</title>
        <authorList>
            <person name="Galagan J.E."/>
            <person name="Nusbaum C."/>
            <person name="Roy A."/>
            <person name="Endrizzi M.G."/>
            <person name="Macdonald P."/>
            <person name="FitzHugh W."/>
            <person name="Calvo S."/>
            <person name="Engels R."/>
            <person name="Smirnov S."/>
            <person name="Atnoor D."/>
            <person name="Brown A."/>
            <person name="Allen N."/>
            <person name="Naylor J."/>
            <person name="Stange-Thomann N."/>
            <person name="DeArellano K."/>
            <person name="Johnson R."/>
            <person name="Linton L."/>
            <person name="McEwan P."/>
            <person name="McKernan K."/>
            <person name="Talamas J."/>
            <person name="Tirrell A."/>
            <person name="Ye W."/>
            <person name="Zimmer A."/>
            <person name="Barber R.D."/>
            <person name="Cann I."/>
            <person name="Graham D.E."/>
            <person name="Grahame D.A."/>
            <person name="Guss A.M."/>
            <person name="Hedderich R."/>
            <person name="Ingram-Smith C."/>
            <person name="Kuettner H.C."/>
            <person name="Krzycki J.A."/>
            <person name="Leigh J.A."/>
            <person name="Li W."/>
            <person name="Liu J."/>
            <person name="Mukhopadhyay B."/>
            <person name="Reeve J.N."/>
            <person name="Smith K."/>
            <person name="Springer T.A."/>
            <person name="Umayam L.A."/>
            <person name="White O."/>
            <person name="White R.H."/>
            <person name="de Macario E.C."/>
            <person name="Ferry J.G."/>
            <person name="Jarrell K.F."/>
            <person name="Jing H."/>
            <person name="Macario A.J.L."/>
            <person name="Paulsen I.T."/>
            <person name="Pritchett M."/>
            <person name="Sowers K.R."/>
            <person name="Swanson R.V."/>
            <person name="Zinder S.H."/>
            <person name="Lander E."/>
            <person name="Metcalf W.W."/>
            <person name="Birren B."/>
        </authorList>
    </citation>
    <scope>NUCLEOTIDE SEQUENCE [LARGE SCALE GENOMIC DNA]</scope>
    <source>
        <strain>ATCC 35395 / DSM 2834 / JCM 12185 / C2A</strain>
    </source>
</reference>
<organism>
    <name type="scientific">Methanosarcina acetivorans (strain ATCC 35395 / DSM 2834 / JCM 12185 / C2A)</name>
    <dbReference type="NCBI Taxonomy" id="188937"/>
    <lineage>
        <taxon>Archaea</taxon>
        <taxon>Methanobacteriati</taxon>
        <taxon>Methanobacteriota</taxon>
        <taxon>Stenosarchaea group</taxon>
        <taxon>Methanomicrobia</taxon>
        <taxon>Methanosarcinales</taxon>
        <taxon>Methanosarcinaceae</taxon>
        <taxon>Methanosarcina</taxon>
    </lineage>
</organism>
<gene>
    <name type="ordered locus">MA_3969</name>
</gene>
<sequence length="247" mass="25620">MQVEAHLQKIIDQDGKVHLTLIDPASQTPERAAEIALAAVEGGTDAIMIGGSTGASGTLLDETVIKIKEKVNVPTILFPGSSAGLSSYADAVFFMSLLNSRDLGYVITNQVLGAPLVYKSQIEPISMAYLVVEPGGTVGWVGDAKLIPRKKPDIAAVYALAGKYLGMHYTYLEAGSGADAPIPPEMIGAVKKVLGENKLIVGGGVRDAKTAKLCASAGADMIVTGTIVEEVKDVAAKVAEIVSAIKS</sequence>